<dbReference type="EC" id="2.1.1.190" evidence="2"/>
<dbReference type="EMBL" id="CP000247">
    <property type="protein sequence ID" value="ABG70755.1"/>
    <property type="molecule type" value="Genomic_DNA"/>
</dbReference>
<dbReference type="RefSeq" id="WP_000046817.1">
    <property type="nucleotide sequence ID" value="NC_008253.1"/>
</dbReference>
<dbReference type="SMR" id="Q0TE74"/>
<dbReference type="KEGG" id="ecp:ECP_2766"/>
<dbReference type="HOGENOM" id="CLU_014689_8_2_6"/>
<dbReference type="Proteomes" id="UP000009182">
    <property type="component" value="Chromosome"/>
</dbReference>
<dbReference type="GO" id="GO:0051539">
    <property type="term" value="F:4 iron, 4 sulfur cluster binding"/>
    <property type="evidence" value="ECO:0007669"/>
    <property type="project" value="UniProtKB-KW"/>
</dbReference>
<dbReference type="GO" id="GO:0005506">
    <property type="term" value="F:iron ion binding"/>
    <property type="evidence" value="ECO:0007669"/>
    <property type="project" value="UniProtKB-UniRule"/>
</dbReference>
<dbReference type="GO" id="GO:0003723">
    <property type="term" value="F:RNA binding"/>
    <property type="evidence" value="ECO:0007669"/>
    <property type="project" value="InterPro"/>
</dbReference>
<dbReference type="GO" id="GO:0070041">
    <property type="term" value="F:rRNA (uridine-C5-)-methyltransferase activity"/>
    <property type="evidence" value="ECO:0007669"/>
    <property type="project" value="UniProtKB-UniRule"/>
</dbReference>
<dbReference type="GO" id="GO:0070475">
    <property type="term" value="P:rRNA base methylation"/>
    <property type="evidence" value="ECO:0007669"/>
    <property type="project" value="TreeGrafter"/>
</dbReference>
<dbReference type="CDD" id="cd02440">
    <property type="entry name" value="AdoMet_MTases"/>
    <property type="match status" value="1"/>
</dbReference>
<dbReference type="FunFam" id="3.40.50.150:FF:000009">
    <property type="entry name" value="23S rRNA (Uracil(1939)-C(5))-methyltransferase RlmD"/>
    <property type="match status" value="1"/>
</dbReference>
<dbReference type="FunFam" id="2.40.50.1070:FF:000004">
    <property type="entry name" value="23S rRNA (uracil(1939)-C(5))-methyltransferase RlmD"/>
    <property type="match status" value="1"/>
</dbReference>
<dbReference type="FunFam" id="2.40.50.140:FF:000097">
    <property type="entry name" value="23S rRNA (uracil(1939)-C(5))-methyltransferase RlmD"/>
    <property type="match status" value="1"/>
</dbReference>
<dbReference type="Gene3D" id="2.40.50.1070">
    <property type="match status" value="1"/>
</dbReference>
<dbReference type="Gene3D" id="2.40.50.140">
    <property type="entry name" value="Nucleic acid-binding proteins"/>
    <property type="match status" value="1"/>
</dbReference>
<dbReference type="Gene3D" id="3.40.50.150">
    <property type="entry name" value="Vaccinia Virus protein VP39"/>
    <property type="match status" value="1"/>
</dbReference>
<dbReference type="HAMAP" id="MF_01010">
    <property type="entry name" value="23SrRNA_methyltr_RlmD"/>
    <property type="match status" value="1"/>
</dbReference>
<dbReference type="InterPro" id="IPR001566">
    <property type="entry name" value="23S_rRNA_MeTrfase_RlmD"/>
</dbReference>
<dbReference type="InterPro" id="IPR030390">
    <property type="entry name" value="MeTrfase_TrmA_AS"/>
</dbReference>
<dbReference type="InterPro" id="IPR030391">
    <property type="entry name" value="MeTrfase_TrmA_CS"/>
</dbReference>
<dbReference type="InterPro" id="IPR012340">
    <property type="entry name" value="NA-bd_OB-fold"/>
</dbReference>
<dbReference type="InterPro" id="IPR029063">
    <property type="entry name" value="SAM-dependent_MTases_sf"/>
</dbReference>
<dbReference type="InterPro" id="IPR002792">
    <property type="entry name" value="TRAM_dom"/>
</dbReference>
<dbReference type="InterPro" id="IPR010280">
    <property type="entry name" value="U5_MeTrfase_fam"/>
</dbReference>
<dbReference type="NCBIfam" id="NF009639">
    <property type="entry name" value="PRK13168.1"/>
    <property type="match status" value="1"/>
</dbReference>
<dbReference type="NCBIfam" id="TIGR00479">
    <property type="entry name" value="rumA"/>
    <property type="match status" value="1"/>
</dbReference>
<dbReference type="PANTHER" id="PTHR11061:SF49">
    <property type="entry name" value="23S RRNA (URACIL(1939)-C(5))-METHYLTRANSFERASE RLMD"/>
    <property type="match status" value="1"/>
</dbReference>
<dbReference type="PANTHER" id="PTHR11061">
    <property type="entry name" value="RNA M5U METHYLTRANSFERASE"/>
    <property type="match status" value="1"/>
</dbReference>
<dbReference type="Pfam" id="PF01938">
    <property type="entry name" value="TRAM"/>
    <property type="match status" value="1"/>
</dbReference>
<dbReference type="Pfam" id="PF05958">
    <property type="entry name" value="tRNA_U5-meth_tr"/>
    <property type="match status" value="1"/>
</dbReference>
<dbReference type="SUPFAM" id="SSF50249">
    <property type="entry name" value="Nucleic acid-binding proteins"/>
    <property type="match status" value="1"/>
</dbReference>
<dbReference type="SUPFAM" id="SSF53335">
    <property type="entry name" value="S-adenosyl-L-methionine-dependent methyltransferases"/>
    <property type="match status" value="1"/>
</dbReference>
<dbReference type="PROSITE" id="PS51687">
    <property type="entry name" value="SAM_MT_RNA_M5U"/>
    <property type="match status" value="1"/>
</dbReference>
<dbReference type="PROSITE" id="PS50926">
    <property type="entry name" value="TRAM"/>
    <property type="match status" value="1"/>
</dbReference>
<dbReference type="PROSITE" id="PS01230">
    <property type="entry name" value="TRMA_1"/>
    <property type="match status" value="1"/>
</dbReference>
<dbReference type="PROSITE" id="PS01231">
    <property type="entry name" value="TRMA_2"/>
    <property type="match status" value="1"/>
</dbReference>
<comment type="function">
    <text evidence="2">Catalyzes the formation of 5-methyl-uridine at position 1939 (m5U1939) in 23S rRNA.</text>
</comment>
<comment type="catalytic activity">
    <reaction evidence="2">
        <text>uridine(1939) in 23S rRNA + S-adenosyl-L-methionine = 5-methyluridine(1939) in 23S rRNA + S-adenosyl-L-homocysteine + H(+)</text>
        <dbReference type="Rhea" id="RHEA:42908"/>
        <dbReference type="Rhea" id="RHEA-COMP:10278"/>
        <dbReference type="Rhea" id="RHEA-COMP:10279"/>
        <dbReference type="ChEBI" id="CHEBI:15378"/>
        <dbReference type="ChEBI" id="CHEBI:57856"/>
        <dbReference type="ChEBI" id="CHEBI:59789"/>
        <dbReference type="ChEBI" id="CHEBI:65315"/>
        <dbReference type="ChEBI" id="CHEBI:74447"/>
        <dbReference type="EC" id="2.1.1.190"/>
    </reaction>
</comment>
<comment type="similarity">
    <text evidence="2">Belongs to the class I-like SAM-binding methyltransferase superfamily. RNA M5U methyltransferase family. RlmD subfamily.</text>
</comment>
<keyword id="KW-0004">4Fe-4S</keyword>
<keyword id="KW-0408">Iron</keyword>
<keyword id="KW-0411">Iron-sulfur</keyword>
<keyword id="KW-0479">Metal-binding</keyword>
<keyword id="KW-0489">Methyltransferase</keyword>
<keyword id="KW-0698">rRNA processing</keyword>
<keyword id="KW-0949">S-adenosyl-L-methionine</keyword>
<keyword id="KW-0808">Transferase</keyword>
<evidence type="ECO:0000250" key="1"/>
<evidence type="ECO:0000255" key="2">
    <source>
        <dbReference type="HAMAP-Rule" id="MF_01010"/>
    </source>
</evidence>
<accession>Q0TE74</accession>
<reference key="1">
    <citation type="journal article" date="2006" name="Mol. Microbiol.">
        <title>Role of pathogenicity island-associated integrases in the genome plasticity of uropathogenic Escherichia coli strain 536.</title>
        <authorList>
            <person name="Hochhut B."/>
            <person name="Wilde C."/>
            <person name="Balling G."/>
            <person name="Middendorf B."/>
            <person name="Dobrindt U."/>
            <person name="Brzuszkiewicz E."/>
            <person name="Gottschalk G."/>
            <person name="Carniel E."/>
            <person name="Hacker J."/>
        </authorList>
    </citation>
    <scope>NUCLEOTIDE SEQUENCE [LARGE SCALE GENOMIC DNA]</scope>
    <source>
        <strain>536 / UPEC</strain>
    </source>
</reference>
<name>RLMD_ECOL5</name>
<proteinExistence type="inferred from homology"/>
<organism>
    <name type="scientific">Escherichia coli O6:K15:H31 (strain 536 / UPEC)</name>
    <dbReference type="NCBI Taxonomy" id="362663"/>
    <lineage>
        <taxon>Bacteria</taxon>
        <taxon>Pseudomonadati</taxon>
        <taxon>Pseudomonadota</taxon>
        <taxon>Gammaproteobacteria</taxon>
        <taxon>Enterobacterales</taxon>
        <taxon>Enterobacteriaceae</taxon>
        <taxon>Escherichia</taxon>
    </lineage>
</organism>
<gene>
    <name evidence="2" type="primary">rlmD</name>
    <name type="synonym">rumA</name>
    <name type="ordered locus">ECP_2766</name>
</gene>
<sequence length="433" mass="48042">MAQFYSAKRRTTTRQIITVSVNDLDSFGQGVARHNGKTLFIPGLLPQENAEVTVTEDKKQYARAKVVRRLSDSPERETPRCPHFGVCGGCQQQHASVDLQQRSKSAALARLMKHEVSEVIADVPWGYRRRARLSLNYLPKTQQLQMGFRKAGSSDIVDVKQCPILVPQLEALLPKVRACLGSLQAMRHLGHVELVQATSGTLMILRHTAPLSSADREKLECFSHSEGLDLYLAPDSEILETVSGEMPWYDSNGLRLTFSPRDFIQVNAGVNQKMVARALEWLDVEPEDRVLDLFCGMGNFTLPLATQAASVVGVEGVPALVEKGQQNARLNGLQNVTFYHENLEEDVTKQPWAKNGFDKVLLDPARAGAAGVMQQIIKLEPIRIVYVSCNPATLARDSEALLKAGYTIARLAMLDMFPHTGHLESMVLFSRVK</sequence>
<protein>
    <recommendedName>
        <fullName evidence="2">23S rRNA (uracil(1939)-C(5))-methyltransferase RlmD</fullName>
        <ecNumber evidence="2">2.1.1.190</ecNumber>
    </recommendedName>
    <alternativeName>
        <fullName evidence="2">23S rRNA(m5U1939)-methyltransferase</fullName>
    </alternativeName>
</protein>
<feature type="initiator methionine" description="Removed" evidence="1">
    <location>
        <position position="1"/>
    </location>
</feature>
<feature type="chain" id="PRO_0000282040" description="23S rRNA (uracil(1939)-C(5))-methyltransferase RlmD">
    <location>
        <begin position="2"/>
        <end position="433"/>
    </location>
</feature>
<feature type="domain" description="TRAM" evidence="2">
    <location>
        <begin position="10"/>
        <end position="68"/>
    </location>
</feature>
<feature type="active site" description="Nucleophile" evidence="2">
    <location>
        <position position="389"/>
    </location>
</feature>
<feature type="binding site" evidence="2">
    <location>
        <position position="81"/>
    </location>
    <ligand>
        <name>[4Fe-4S] cluster</name>
        <dbReference type="ChEBI" id="CHEBI:49883"/>
    </ligand>
</feature>
<feature type="binding site" evidence="2">
    <location>
        <position position="87"/>
    </location>
    <ligand>
        <name>[4Fe-4S] cluster</name>
        <dbReference type="ChEBI" id="CHEBI:49883"/>
    </ligand>
</feature>
<feature type="binding site" evidence="2">
    <location>
        <position position="90"/>
    </location>
    <ligand>
        <name>[4Fe-4S] cluster</name>
        <dbReference type="ChEBI" id="CHEBI:49883"/>
    </ligand>
</feature>
<feature type="binding site" evidence="2">
    <location>
        <position position="162"/>
    </location>
    <ligand>
        <name>[4Fe-4S] cluster</name>
        <dbReference type="ChEBI" id="CHEBI:49883"/>
    </ligand>
</feature>
<feature type="binding site" evidence="2">
    <location>
        <position position="265"/>
    </location>
    <ligand>
        <name>S-adenosyl-L-methionine</name>
        <dbReference type="ChEBI" id="CHEBI:59789"/>
    </ligand>
</feature>
<feature type="binding site" evidence="2">
    <location>
        <position position="294"/>
    </location>
    <ligand>
        <name>S-adenosyl-L-methionine</name>
        <dbReference type="ChEBI" id="CHEBI:59789"/>
    </ligand>
</feature>
<feature type="binding site" evidence="2">
    <location>
        <position position="299"/>
    </location>
    <ligand>
        <name>S-adenosyl-L-methionine</name>
        <dbReference type="ChEBI" id="CHEBI:59789"/>
    </ligand>
</feature>
<feature type="binding site" evidence="2">
    <location>
        <position position="315"/>
    </location>
    <ligand>
        <name>S-adenosyl-L-methionine</name>
        <dbReference type="ChEBI" id="CHEBI:59789"/>
    </ligand>
</feature>
<feature type="binding site" evidence="2">
    <location>
        <position position="342"/>
    </location>
    <ligand>
        <name>S-adenosyl-L-methionine</name>
        <dbReference type="ChEBI" id="CHEBI:59789"/>
    </ligand>
</feature>
<feature type="binding site" evidence="2">
    <location>
        <position position="363"/>
    </location>
    <ligand>
        <name>S-adenosyl-L-methionine</name>
        <dbReference type="ChEBI" id="CHEBI:59789"/>
    </ligand>
</feature>